<name>Y3043_PSYIN</name>
<protein>
    <recommendedName>
        <fullName evidence="1">UPF0235 protein Ping_3043</fullName>
    </recommendedName>
</protein>
<dbReference type="EMBL" id="CP000510">
    <property type="protein sequence ID" value="ABM04745.1"/>
    <property type="molecule type" value="Genomic_DNA"/>
</dbReference>
<dbReference type="RefSeq" id="WP_011771299.1">
    <property type="nucleotide sequence ID" value="NC_008709.1"/>
</dbReference>
<dbReference type="SMR" id="A1SZ30"/>
<dbReference type="STRING" id="357804.Ping_3043"/>
<dbReference type="KEGG" id="pin:Ping_3043"/>
<dbReference type="eggNOG" id="COG1872">
    <property type="taxonomic scope" value="Bacteria"/>
</dbReference>
<dbReference type="HOGENOM" id="CLU_130694_5_0_6"/>
<dbReference type="OrthoDB" id="9800587at2"/>
<dbReference type="Proteomes" id="UP000000639">
    <property type="component" value="Chromosome"/>
</dbReference>
<dbReference type="GO" id="GO:0005737">
    <property type="term" value="C:cytoplasm"/>
    <property type="evidence" value="ECO:0007669"/>
    <property type="project" value="TreeGrafter"/>
</dbReference>
<dbReference type="Gene3D" id="3.30.1200.10">
    <property type="entry name" value="YggU-like"/>
    <property type="match status" value="1"/>
</dbReference>
<dbReference type="HAMAP" id="MF_00634">
    <property type="entry name" value="UPF0235"/>
    <property type="match status" value="1"/>
</dbReference>
<dbReference type="InterPro" id="IPR003746">
    <property type="entry name" value="DUF167"/>
</dbReference>
<dbReference type="InterPro" id="IPR036591">
    <property type="entry name" value="YggU-like_sf"/>
</dbReference>
<dbReference type="NCBIfam" id="TIGR00251">
    <property type="entry name" value="DUF167 family protein"/>
    <property type="match status" value="1"/>
</dbReference>
<dbReference type="NCBIfam" id="NF003466">
    <property type="entry name" value="PRK05090.1"/>
    <property type="match status" value="1"/>
</dbReference>
<dbReference type="PANTHER" id="PTHR13420">
    <property type="entry name" value="UPF0235 PROTEIN C15ORF40"/>
    <property type="match status" value="1"/>
</dbReference>
<dbReference type="PANTHER" id="PTHR13420:SF7">
    <property type="entry name" value="UPF0235 PROTEIN C15ORF40"/>
    <property type="match status" value="1"/>
</dbReference>
<dbReference type="Pfam" id="PF02594">
    <property type="entry name" value="DUF167"/>
    <property type="match status" value="1"/>
</dbReference>
<dbReference type="SMART" id="SM01152">
    <property type="entry name" value="DUF167"/>
    <property type="match status" value="1"/>
</dbReference>
<dbReference type="SUPFAM" id="SSF69786">
    <property type="entry name" value="YggU-like"/>
    <property type="match status" value="1"/>
</dbReference>
<organism>
    <name type="scientific">Psychromonas ingrahamii (strain DSM 17664 / CCUG 51855 / 37)</name>
    <dbReference type="NCBI Taxonomy" id="357804"/>
    <lineage>
        <taxon>Bacteria</taxon>
        <taxon>Pseudomonadati</taxon>
        <taxon>Pseudomonadota</taxon>
        <taxon>Gammaproteobacteria</taxon>
        <taxon>Alteromonadales</taxon>
        <taxon>Psychromonadaceae</taxon>
        <taxon>Psychromonas</taxon>
    </lineage>
</organism>
<reference key="1">
    <citation type="journal article" date="2008" name="BMC Genomics">
        <title>Genomics of an extreme psychrophile, Psychromonas ingrahamii.</title>
        <authorList>
            <person name="Riley M."/>
            <person name="Staley J.T."/>
            <person name="Danchin A."/>
            <person name="Wang T.Z."/>
            <person name="Brettin T.S."/>
            <person name="Hauser L.J."/>
            <person name="Land M.L."/>
            <person name="Thompson L.S."/>
        </authorList>
    </citation>
    <scope>NUCLEOTIDE SEQUENCE [LARGE SCALE GENOMIC DNA]</scope>
    <source>
        <strain>DSM 17664 / CCUG 51855 / 37</strain>
    </source>
</reference>
<gene>
    <name type="ordered locus">Ping_3043</name>
</gene>
<evidence type="ECO:0000255" key="1">
    <source>
        <dbReference type="HAMAP-Rule" id="MF_00634"/>
    </source>
</evidence>
<proteinExistence type="inferred from homology"/>
<sequence length="98" mass="10971">MAVDNLQYEGEDLLLRLVLQPKSSRDQFIGLLGDELKIAITAPPVDGKANAHLIKFLSKQFKVAKGAIIIEKGLLSRHKRVRVCAPKKMPEFFNSLNE</sequence>
<accession>A1SZ30</accession>
<feature type="chain" id="PRO_1000056779" description="UPF0235 protein Ping_3043">
    <location>
        <begin position="1"/>
        <end position="98"/>
    </location>
</feature>
<keyword id="KW-1185">Reference proteome</keyword>
<comment type="similarity">
    <text evidence="1">Belongs to the UPF0235 family.</text>
</comment>